<sequence>MFARDSGRGHRHGRDRQAAVVPAPAGRARFTGDAPAVAVVGGGIAGIAAATLLAERGVRVTLYEREPGLGGRLSGWPTELTDGTTVTMSRGFHAFFRQYYNLRGLLRRVDPDLGSLTRLPDYPLWHGSGLRDSFARVPRTPPLSAMGFVALSPTFGLRDLVRINPRAAVGLLDVRVPEVYERLDGISATDFLDRIRFPEAAHHLAFEVFSRSFFADPRELSAAELALMFHIYFLGSSEGLLFDVPGEPFPAALWEPLHHYLEVHRVDVRTRTPLRQVRPRPGGGLDLTTDDRTTRYDALVLALDSGALRRLVAASPELGDTDWRARIARLRTAPPFLVSRLWLDRPVAHDRPGFLGTSGYGPLDNVSVLDRWEGEAARWARRTRGSVVELHAYAVAPDADRSAVQDEALRQLHRVYPETRSARLLDARHEWRADCPMFPVGGYRDRPGVRSPDPAVTVAGDMVRTELPVALMERAATSGFLAANALLERWGVRGQTLWTVPRAGRSAVLRRLAALAD</sequence>
<gene>
    <name evidence="4" type="primary">crtU</name>
</gene>
<dbReference type="EC" id="1.3.99.39" evidence="3"/>
<dbReference type="EMBL" id="X95596">
    <property type="protein sequence ID" value="CAA64853.1"/>
    <property type="molecule type" value="Genomic_DNA"/>
</dbReference>
<dbReference type="SMR" id="P72449"/>
<dbReference type="GO" id="GO:0016491">
    <property type="term" value="F:oxidoreductase activity"/>
    <property type="evidence" value="ECO:0007669"/>
    <property type="project" value="UniProtKB-KW"/>
</dbReference>
<dbReference type="GO" id="GO:0016117">
    <property type="term" value="P:carotenoid biosynthetic process"/>
    <property type="evidence" value="ECO:0007669"/>
    <property type="project" value="UniProtKB-KW"/>
</dbReference>
<dbReference type="Gene3D" id="3.50.50.60">
    <property type="entry name" value="FAD/NAD(P)-binding domain"/>
    <property type="match status" value="1"/>
</dbReference>
<dbReference type="InterPro" id="IPR002937">
    <property type="entry name" value="Amino_oxidase"/>
</dbReference>
<dbReference type="InterPro" id="IPR036188">
    <property type="entry name" value="FAD/NAD-bd_sf"/>
</dbReference>
<dbReference type="InterPro" id="IPR050464">
    <property type="entry name" value="Zeta_carotene_desat/Oxidored"/>
</dbReference>
<dbReference type="PANTHER" id="PTHR42923:SF43">
    <property type="entry name" value="AMINE OXIDASE"/>
    <property type="match status" value="1"/>
</dbReference>
<dbReference type="PANTHER" id="PTHR42923">
    <property type="entry name" value="PROTOPORPHYRINOGEN OXIDASE"/>
    <property type="match status" value="1"/>
</dbReference>
<dbReference type="Pfam" id="PF01593">
    <property type="entry name" value="Amino_oxidase"/>
    <property type="match status" value="1"/>
</dbReference>
<dbReference type="PRINTS" id="PR00419">
    <property type="entry name" value="ADXRDTASE"/>
</dbReference>
<dbReference type="SUPFAM" id="SSF51905">
    <property type="entry name" value="FAD/NAD(P)-binding domain"/>
    <property type="match status" value="1"/>
</dbReference>
<name>CRTU_STRGR</name>
<comment type="function">
    <text evidence="3">Involved in the biosynthesis of isorenieratene, a carotenoid with aromatic end groups (PubMed:10395965). Catalyzes the introduction of two additional double bonds into each ionone ring of beta-carotene to produce isorenieratene. The reaction includes an intramolecular methyl transfer from position C1 to position C2 of the ring (PubMed:10395965).</text>
</comment>
<comment type="catalytic activity">
    <reaction evidence="3">
        <text>a carotenoid beta-end derivative + 2 A = a carotenoid phi-end derivative + 2 AH2</text>
        <dbReference type="Rhea" id="RHEA:22524"/>
        <dbReference type="ChEBI" id="CHEBI:13193"/>
        <dbReference type="ChEBI" id="CHEBI:17499"/>
        <dbReference type="ChEBI" id="CHEBI:139120"/>
        <dbReference type="ChEBI" id="CHEBI:139129"/>
        <dbReference type="EC" id="1.3.99.39"/>
    </reaction>
</comment>
<comment type="cofactor">
    <cofactor evidence="1">
        <name>FAD</name>
        <dbReference type="ChEBI" id="CHEBI:57692"/>
    </cofactor>
</comment>
<comment type="pathway">
    <text evidence="3">Carotenoid biosynthesis.</text>
</comment>
<comment type="disruption phenotype">
    <text evidence="3">Deletion of the gene leads to accumulation of beta-carotene.</text>
</comment>
<comment type="similarity">
    <text evidence="5">Belongs to the carotenoid/retinoid oxidoreductase family.</text>
</comment>
<proteinExistence type="evidence at protein level"/>
<reference key="1">
    <citation type="journal article" date="1996" name="Mol. Gen. Genet.">
        <title>Activation and analysis of cryptic crt genes for carotenoid biosynthesis from Streptomyces griseus.</title>
        <authorList>
            <person name="Schumann G."/>
            <person name="Nurnberger H."/>
            <person name="Sandmann G."/>
            <person name="Kruegel H.J."/>
        </authorList>
    </citation>
    <scope>NUCLEOTIDE SEQUENCE [GENOMIC DNA]</scope>
    <source>
        <strain>JA 3933</strain>
    </source>
</reference>
<reference key="2">
    <citation type="journal article" date="1999" name="Biochim. Biophys. Acta">
        <title>Functional analysis of genes from Streptomyces griseus involved in the synthesis of isorenieratene, a carotenoid with aromatic end groups, revealed a novel type of carotenoid desaturase.</title>
        <authorList>
            <person name="Kruegel H."/>
            <person name="Krubasik P."/>
            <person name="Weber K."/>
            <person name="Saluz H.P."/>
            <person name="Sandmann G."/>
        </authorList>
    </citation>
    <scope>FUNCTION</scope>
    <scope>CATALYTIC ACTIVITY</scope>
    <scope>PATHWAY</scope>
    <scope>DISRUPTION PHENOTYPE</scope>
    <source>
        <strain>JA 3933</strain>
    </source>
</reference>
<evidence type="ECO:0000250" key="1">
    <source>
        <dbReference type="UniProtKB" id="A2XDA1"/>
    </source>
</evidence>
<evidence type="ECO:0000256" key="2">
    <source>
        <dbReference type="SAM" id="MobiDB-lite"/>
    </source>
</evidence>
<evidence type="ECO:0000269" key="3">
    <source>
    </source>
</evidence>
<evidence type="ECO:0000303" key="4">
    <source>
    </source>
</evidence>
<evidence type="ECO:0000305" key="5"/>
<organism>
    <name type="scientific">Streptomyces griseus</name>
    <dbReference type="NCBI Taxonomy" id="1911"/>
    <lineage>
        <taxon>Bacteria</taxon>
        <taxon>Bacillati</taxon>
        <taxon>Actinomycetota</taxon>
        <taxon>Actinomycetes</taxon>
        <taxon>Kitasatosporales</taxon>
        <taxon>Streptomycetaceae</taxon>
        <taxon>Streptomyces</taxon>
    </lineage>
</organism>
<accession>P72449</accession>
<feature type="chain" id="PRO_0000453389" description="Carotenoid phi-ring synthase">
    <location>
        <begin position="1"/>
        <end position="517"/>
    </location>
</feature>
<feature type="region of interest" description="Disordered" evidence="2">
    <location>
        <begin position="1"/>
        <end position="24"/>
    </location>
</feature>
<feature type="binding site" evidence="1">
    <location>
        <position position="45"/>
    </location>
    <ligand>
        <name>FAD</name>
        <dbReference type="ChEBI" id="CHEBI:57692"/>
    </ligand>
</feature>
<feature type="binding site" evidence="1">
    <location>
        <begin position="64"/>
        <end position="65"/>
    </location>
    <ligand>
        <name>FAD</name>
        <dbReference type="ChEBI" id="CHEBI:57692"/>
    </ligand>
</feature>
<feature type="binding site" evidence="1">
    <location>
        <position position="72"/>
    </location>
    <ligand>
        <name>FAD</name>
        <dbReference type="ChEBI" id="CHEBI:57692"/>
    </ligand>
</feature>
<feature type="binding site" evidence="1">
    <location>
        <position position="99"/>
    </location>
    <ligand>
        <name>FAD</name>
        <dbReference type="ChEBI" id="CHEBI:57692"/>
    </ligand>
</feature>
<feature type="binding site" evidence="1">
    <location>
        <position position="461"/>
    </location>
    <ligand>
        <name>FAD</name>
        <dbReference type="ChEBI" id="CHEBI:57692"/>
    </ligand>
</feature>
<feature type="binding site" evidence="1">
    <location>
        <position position="472"/>
    </location>
    <ligand>
        <name>FAD</name>
        <dbReference type="ChEBI" id="CHEBI:57692"/>
    </ligand>
</feature>
<protein>
    <recommendedName>
        <fullName evidence="5">Carotenoid phi-ring synthase</fullName>
        <ecNumber evidence="3">1.3.99.39</ecNumber>
    </recommendedName>
    <alternativeName>
        <fullName evidence="5">Beta-carotene desaturase</fullName>
    </alternativeName>
    <alternativeName>
        <fullName evidence="5">Carotenoid beta-ring:acceptor oxidoreductase/methyltranferase (phi-ring forming)</fullName>
    </alternativeName>
</protein>
<keyword id="KW-0125">Carotenoid biosynthesis</keyword>
<keyword id="KW-0274">FAD</keyword>
<keyword id="KW-0285">Flavoprotein</keyword>
<keyword id="KW-0560">Oxidoreductase</keyword>